<reference key="1">
    <citation type="journal article" date="1992" name="EMBO J.">
        <title>OCH1 encodes a novel membrane bound mannosyltransferase: outer chain elongation of asparagine-linked oligosaccharides.</title>
        <authorList>
            <person name="Nakayama K."/>
            <person name="Nagasu T."/>
            <person name="Shimma Y."/>
            <person name="Kuromitsu J.-R."/>
            <person name="Jigami Y."/>
        </authorList>
    </citation>
    <scope>NUCLEOTIDE SEQUENCE [GENOMIC DNA]</scope>
    <scope>DISRUPTION PHENOTYPE</scope>
    <scope>GLYCOSYLATION</scope>
    <scope>SUBCELLULAR LOCATION</scope>
    <scope>TOPOLOGY</scope>
    <scope>FUNCTION</scope>
    <scope>CATALYTIC ACTIVITY</scope>
    <source>
        <strain>EHF-2C</strain>
    </source>
</reference>
<reference key="2">
    <citation type="journal article" date="1997" name="Nature">
        <title>The nucleotide sequence of Saccharomyces cerevisiae chromosome VII.</title>
        <authorList>
            <person name="Tettelin H."/>
            <person name="Agostoni-Carbone M.L."/>
            <person name="Albermann K."/>
            <person name="Albers M."/>
            <person name="Arroyo J."/>
            <person name="Backes U."/>
            <person name="Barreiros T."/>
            <person name="Bertani I."/>
            <person name="Bjourson A.J."/>
            <person name="Brueckner M."/>
            <person name="Bruschi C.V."/>
            <person name="Carignani G."/>
            <person name="Castagnoli L."/>
            <person name="Cerdan E."/>
            <person name="Clemente M.L."/>
            <person name="Coblenz A."/>
            <person name="Coglievina M."/>
            <person name="Coissac E."/>
            <person name="Defoor E."/>
            <person name="Del Bino S."/>
            <person name="Delius H."/>
            <person name="Delneri D."/>
            <person name="de Wergifosse P."/>
            <person name="Dujon B."/>
            <person name="Durand P."/>
            <person name="Entian K.-D."/>
            <person name="Eraso P."/>
            <person name="Escribano V."/>
            <person name="Fabiani L."/>
            <person name="Fartmann B."/>
            <person name="Feroli F."/>
            <person name="Feuermann M."/>
            <person name="Frontali L."/>
            <person name="Garcia-Gonzalez M."/>
            <person name="Garcia-Saez M.I."/>
            <person name="Goffeau A."/>
            <person name="Guerreiro P."/>
            <person name="Hani J."/>
            <person name="Hansen M."/>
            <person name="Hebling U."/>
            <person name="Hernandez K."/>
            <person name="Heumann K."/>
            <person name="Hilger F."/>
            <person name="Hofmann B."/>
            <person name="Indge K.J."/>
            <person name="James C.M."/>
            <person name="Klima R."/>
            <person name="Koetter P."/>
            <person name="Kramer B."/>
            <person name="Kramer W."/>
            <person name="Lauquin G."/>
            <person name="Leuther H."/>
            <person name="Louis E.J."/>
            <person name="Maillier E."/>
            <person name="Marconi A."/>
            <person name="Martegani E."/>
            <person name="Mazon M.J."/>
            <person name="Mazzoni C."/>
            <person name="McReynolds A.D.K."/>
            <person name="Melchioretto P."/>
            <person name="Mewes H.-W."/>
            <person name="Minenkova O."/>
            <person name="Mueller-Auer S."/>
            <person name="Nawrocki A."/>
            <person name="Netter P."/>
            <person name="Neu R."/>
            <person name="Nombela C."/>
            <person name="Oliver S.G."/>
            <person name="Panzeri L."/>
            <person name="Paoluzi S."/>
            <person name="Plevani P."/>
            <person name="Portetelle D."/>
            <person name="Portillo F."/>
            <person name="Potier S."/>
            <person name="Purnelle B."/>
            <person name="Rieger M."/>
            <person name="Riles L."/>
            <person name="Rinaldi T."/>
            <person name="Robben J."/>
            <person name="Rodrigues-Pousada C."/>
            <person name="Rodriguez-Belmonte E."/>
            <person name="Rodriguez-Torres A.M."/>
            <person name="Rose M."/>
            <person name="Ruzzi M."/>
            <person name="Saliola M."/>
            <person name="Sanchez-Perez M."/>
            <person name="Schaefer B."/>
            <person name="Schaefer M."/>
            <person name="Scharfe M."/>
            <person name="Schmidheini T."/>
            <person name="Schreer A."/>
            <person name="Skala J."/>
            <person name="Souciet J.-L."/>
            <person name="Steensma H.Y."/>
            <person name="Talla E."/>
            <person name="Thierry A."/>
            <person name="Vandenbol M."/>
            <person name="van der Aart Q.J.M."/>
            <person name="Van Dyck L."/>
            <person name="Vanoni M."/>
            <person name="Verhasselt P."/>
            <person name="Voet M."/>
            <person name="Volckaert G."/>
            <person name="Wambutt R."/>
            <person name="Watson M.D."/>
            <person name="Weber N."/>
            <person name="Wedler E."/>
            <person name="Wedler H."/>
            <person name="Wipfli P."/>
            <person name="Wolf K."/>
            <person name="Wright L.F."/>
            <person name="Zaccaria P."/>
            <person name="Zimmermann M."/>
            <person name="Zollner A."/>
            <person name="Kleine K."/>
        </authorList>
    </citation>
    <scope>NUCLEOTIDE SEQUENCE [LARGE SCALE GENOMIC DNA]</scope>
    <source>
        <strain>ATCC 204508 / S288c</strain>
    </source>
</reference>
<reference key="3">
    <citation type="journal article" date="2014" name="G3 (Bethesda)">
        <title>The reference genome sequence of Saccharomyces cerevisiae: Then and now.</title>
        <authorList>
            <person name="Engel S.R."/>
            <person name="Dietrich F.S."/>
            <person name="Fisk D.G."/>
            <person name="Binkley G."/>
            <person name="Balakrishnan R."/>
            <person name="Costanzo M.C."/>
            <person name="Dwight S.S."/>
            <person name="Hitz B.C."/>
            <person name="Karra K."/>
            <person name="Nash R.S."/>
            <person name="Weng S."/>
            <person name="Wong E.D."/>
            <person name="Lloyd P."/>
            <person name="Skrzypek M.S."/>
            <person name="Miyasato S.R."/>
            <person name="Simison M."/>
            <person name="Cherry J.M."/>
        </authorList>
    </citation>
    <scope>GENOME REANNOTATION</scope>
    <source>
        <strain>ATCC 204508 / S288c</strain>
    </source>
</reference>
<reference key="4">
    <citation type="journal article" date="2007" name="Genome Res.">
        <title>Approaching a complete repository of sequence-verified protein-encoding clones for Saccharomyces cerevisiae.</title>
        <authorList>
            <person name="Hu Y."/>
            <person name="Rolfs A."/>
            <person name="Bhullar B."/>
            <person name="Murthy T.V.S."/>
            <person name="Zhu C."/>
            <person name="Berger M.F."/>
            <person name="Camargo A.A."/>
            <person name="Kelley F."/>
            <person name="McCarron S."/>
            <person name="Jepson D."/>
            <person name="Richardson A."/>
            <person name="Raphael J."/>
            <person name="Moreira D."/>
            <person name="Taycher E."/>
            <person name="Zuo D."/>
            <person name="Mohr S."/>
            <person name="Kane M.F."/>
            <person name="Williamson J."/>
            <person name="Simpson A.J.G."/>
            <person name="Bulyk M.L."/>
            <person name="Harlow E."/>
            <person name="Marsischky G."/>
            <person name="Kolodner R.D."/>
            <person name="LaBaer J."/>
        </authorList>
    </citation>
    <scope>NUCLEOTIDE SEQUENCE [GENOMIC DNA]</scope>
    <source>
        <strain>ATCC 204508 / S288c</strain>
    </source>
</reference>
<reference key="5">
    <citation type="journal article" date="1992" name="Yeast">
        <title>Isolation of new temperature-sensitive mutants of Saccharomyces cerevisiae deficient in mannose outer chain elongation.</title>
        <authorList>
            <person name="Nagasu T."/>
            <person name="Shimma Y."/>
            <person name="Nakanishi Y."/>
            <person name="Kuromitsu J."/>
            <person name="Iwama K."/>
            <person name="Nakayama K."/>
            <person name="Suzuki K."/>
            <person name="Jigami Y."/>
        </authorList>
    </citation>
    <scope>FUNCTION</scope>
    <scope>DISRUPTION PHENOTYPE</scope>
</reference>
<reference key="6">
    <citation type="journal article" date="1993" name="J. Biol. Chem.">
        <title>Structure of the N-linked oligosaccharides that show the complete loss of alpha-1,6-polymannose outer chain from och1, och1 mnn1, and och1 mnn1 alg3 mutants of Saccharomyces cerevisiae.</title>
        <authorList>
            <person name="Nakanishi-Shindo Y."/>
            <person name="Nakayama K."/>
            <person name="Tanaka A."/>
            <person name="Toda Y."/>
            <person name="Jigami Y."/>
        </authorList>
    </citation>
    <scope>DISRUPTION PHENOTYPE</scope>
    <scope>FUNCTION</scope>
</reference>
<reference key="7">
    <citation type="journal article" date="1995" name="FEBS Lett.">
        <title>Glycoprotein biosynthesis in Saccharomyces cerevisiae: ngd29, an N-glycosylation mutant allelic to och1 having a defect in the initiation of outer chain formation.</title>
        <authorList>
            <person name="Lehle L."/>
            <person name="Eiden A."/>
            <person name="Lehnert K."/>
            <person name="Haselbeck A."/>
            <person name="Kopetzki E."/>
        </authorList>
    </citation>
    <scope>FUNCTION</scope>
    <scope>DISRUPTION PHENOTYPE</scope>
</reference>
<reference key="8">
    <citation type="journal article" date="1996" name="J. Cell Biol.">
        <title>Localization of a yeast early Golgi mannosyltransferase, Och1p, involves retrograde transport.</title>
        <authorList>
            <person name="Harris S.L."/>
            <person name="Waters M.G."/>
        </authorList>
    </citation>
    <scope>SUBCELLULAR LOCATION</scope>
</reference>
<reference key="9">
    <citation type="journal article" date="2000" name="Methods Enzymol.">
        <title>Use of imidazoleglycerolphosphate dehydratase (His3) as a biological reporter in yeast.</title>
        <authorList>
            <person name="Horecka J."/>
            <person name="Sprague G.F. Jr."/>
        </authorList>
    </citation>
    <scope>INDUCTION</scope>
</reference>
<reference key="10">
    <citation type="journal article" date="2000" name="Genetics">
        <title>Defects in protein glycosylation cause SHO1-dependent activation of a STE12 signaling pathway in yeast.</title>
        <authorList>
            <person name="Cullen P.J."/>
            <person name="Schultz J."/>
            <person name="Horecka J."/>
            <person name="Stevenson B.J."/>
            <person name="Jigami Y."/>
            <person name="Sprague G.F. Jr."/>
        </authorList>
    </citation>
    <scope>DISRUPTION PHENOTYPE</scope>
</reference>
<reference key="11">
    <citation type="journal article" date="2002" name="Mol. Biol. Cell">
        <title>The eukaryotic two-component histidine kinase Sln1p regulates OCH1 via the transcription factor, Skn7p.</title>
        <authorList>
            <person name="Li S."/>
            <person name="Dean S."/>
            <person name="Li Z."/>
            <person name="Horecka J."/>
            <person name="Deschenes R.J."/>
            <person name="Fassler J.S."/>
        </authorList>
    </citation>
    <scope>INDUCTION</scope>
</reference>
<reference key="12">
    <citation type="journal article" date="2002" name="Yeast">
        <title>Cdc4 is involved in the transcriptional control of OCH1, a gene encoding alpha-1,6-mannosyltransferase in Saccharomyces cerevisiae.</title>
        <authorList>
            <person name="Cui Z."/>
            <person name="Horecka J."/>
            <person name="Jigami Y."/>
        </authorList>
    </citation>
    <scope>INDUCTION</scope>
</reference>
<reference key="13">
    <citation type="journal article" date="2003" name="Nature">
        <title>Global analysis of protein expression in yeast.</title>
        <authorList>
            <person name="Ghaemmaghami S."/>
            <person name="Huh W.-K."/>
            <person name="Bower K."/>
            <person name="Howson R.W."/>
            <person name="Belle A."/>
            <person name="Dephoure N."/>
            <person name="O'Shea E.K."/>
            <person name="Weissman J.S."/>
        </authorList>
    </citation>
    <scope>LEVEL OF PROTEIN EXPRESSION [LARGE SCALE ANALYSIS]</scope>
</reference>
<reference key="14">
    <citation type="journal article" date="2004" name="J. Biol. Chem.">
        <title>Retrograde transport of the mannosyltransferase Och1p to the early Golgi requires a component of the COG transport complex.</title>
        <authorList>
            <person name="Bruinsma P."/>
            <person name="Spelbrink R.G."/>
            <person name="Nothwehr S.F."/>
        </authorList>
    </citation>
    <scope>SUBCELLULAR LOCATION</scope>
</reference>
<reference key="15">
    <citation type="journal article" date="2004" name="J. Cell Sci.">
        <title>Activity of recycling Golgi mannosyltransferases in the yeast endoplasmic reticulum.</title>
        <authorList>
            <person name="Karhinen L."/>
            <person name="Makarow M."/>
        </authorList>
    </citation>
    <scope>SUBCELLULAR LOCATION</scope>
</reference>
<reference key="16">
    <citation type="journal article" date="2006" name="FEBS J.">
        <title>Saccharomyces cerevisiae alpha1,6-mannosyltransferase has a catalytic potential to transfer a second mannose molecule.</title>
        <authorList>
            <person name="Kitajima T."/>
            <person name="Chiba Y."/>
            <person name="Jigami Y."/>
        </authorList>
    </citation>
    <scope>FUNCTION</scope>
    <scope>CATALYTIC ACTIVITY</scope>
    <scope>BIOPHYSICOCHEMICAL PROPERTIES</scope>
    <scope>COFACTOR</scope>
    <scope>DOMAIN</scope>
    <scope>MUTAGENESIS OF ASP-187</scope>
</reference>
<reference key="17">
    <citation type="journal article" date="2011" name="Glycobiology">
        <title>Metabolism of free oligosaccharides is facilitated in the och1Delta mutant of Saccharomyces cerevisiae.</title>
        <authorList>
            <person name="Hirayama H."/>
            <person name="Suzuki T."/>
        </authorList>
    </citation>
    <scope>DISRUPTION PHENOTYPE</scope>
</reference>
<reference key="18">
    <citation type="journal article" date="2011" name="J. Biol. Chem.">
        <title>Endoplasmic reticulum-associated degradation (ERAD) and free oligosaccharide generation in Saccharomyces cerevisiae.</title>
        <authorList>
            <person name="Chantret I."/>
            <person name="Kodali V.P."/>
            <person name="Lahmouich C."/>
            <person name="Harvey D.J."/>
            <person name="Moore S.E."/>
        </authorList>
    </citation>
    <scope>FUNCTION</scope>
</reference>
<feature type="chain" id="PRO_0000080563" description="Initiation-specific alpha-1,6-mannosyltransferase">
    <location>
        <begin position="1"/>
        <end position="480"/>
    </location>
</feature>
<feature type="topological domain" description="Cytoplasmic" evidence="18">
    <location>
        <begin position="1"/>
        <end position="15"/>
    </location>
</feature>
<feature type="transmembrane region" description="Helical; Signal-anchor for type II membrane protein" evidence="1 18">
    <location>
        <begin position="16"/>
        <end position="30"/>
    </location>
</feature>
<feature type="topological domain" description="Lumenal" evidence="16 18">
    <location>
        <begin position="31"/>
        <end position="480"/>
    </location>
</feature>
<feature type="short sequence motif" description="DXD motif" evidence="19">
    <location>
        <begin position="187"/>
        <end position="189"/>
    </location>
</feature>
<feature type="glycosylation site" description="N-linked (GlcNAc...) asparagine" evidence="1">
    <location>
        <position position="203"/>
    </location>
</feature>
<feature type="glycosylation site" description="N-linked (GlcNAc...) asparagine" evidence="1">
    <location>
        <position position="281"/>
    </location>
</feature>
<feature type="glycosylation site" description="N-linked (GlcNAc...) asparagine" evidence="1">
    <location>
        <position position="341"/>
    </location>
</feature>
<feature type="glycosylation site" description="N-linked (GlcNAc...) asparagine" evidence="1">
    <location>
        <position position="393"/>
    </location>
</feature>
<feature type="mutagenesis site" description="Loss of mannosyltransferase activity." evidence="11">
    <original>D</original>
    <variation>A</variation>
    <location>
        <position position="187"/>
    </location>
</feature>
<evidence type="ECO:0000255" key="1"/>
<evidence type="ECO:0000269" key="2">
    <source>
    </source>
</evidence>
<evidence type="ECO:0000269" key="3">
    <source>
    </source>
</evidence>
<evidence type="ECO:0000269" key="4">
    <source>
    </source>
</evidence>
<evidence type="ECO:0000269" key="5">
    <source>
    </source>
</evidence>
<evidence type="ECO:0000269" key="6">
    <source>
    </source>
</evidence>
<evidence type="ECO:0000269" key="7">
    <source>
    </source>
</evidence>
<evidence type="ECO:0000269" key="8">
    <source>
    </source>
</evidence>
<evidence type="ECO:0000269" key="9">
    <source>
    </source>
</evidence>
<evidence type="ECO:0000269" key="10">
    <source>
    </source>
</evidence>
<evidence type="ECO:0000269" key="11">
    <source>
    </source>
</evidence>
<evidence type="ECO:0000269" key="12">
    <source>
    </source>
</evidence>
<evidence type="ECO:0000269" key="13">
    <source>
    </source>
</evidence>
<evidence type="ECO:0000269" key="14">
    <source>
    </source>
</evidence>
<evidence type="ECO:0000269" key="15">
    <source>
    </source>
</evidence>
<evidence type="ECO:0000269" key="16">
    <source>
    </source>
</evidence>
<evidence type="ECO:0000303" key="17">
    <source>
    </source>
</evidence>
<evidence type="ECO:0000303" key="18">
    <source>
    </source>
</evidence>
<evidence type="ECO:0000303" key="19">
    <source>
    </source>
</evidence>
<evidence type="ECO:0000303" key="20">
    <source>
    </source>
</evidence>
<evidence type="ECO:0000305" key="21"/>
<evidence type="ECO:0000312" key="22">
    <source>
        <dbReference type="SGD" id="S000003006"/>
    </source>
</evidence>
<name>OCH1_YEAST</name>
<accession>P31755</accession>
<accession>D6VUA1</accession>
<organism>
    <name type="scientific">Saccharomyces cerevisiae (strain ATCC 204508 / S288c)</name>
    <name type="common">Baker's yeast</name>
    <dbReference type="NCBI Taxonomy" id="559292"/>
    <lineage>
        <taxon>Eukaryota</taxon>
        <taxon>Fungi</taxon>
        <taxon>Dikarya</taxon>
        <taxon>Ascomycota</taxon>
        <taxon>Saccharomycotina</taxon>
        <taxon>Saccharomycetes</taxon>
        <taxon>Saccharomycetales</taxon>
        <taxon>Saccharomycetaceae</taxon>
        <taxon>Saccharomyces</taxon>
    </lineage>
</organism>
<keyword id="KW-0256">Endoplasmic reticulum</keyword>
<keyword id="KW-0325">Glycoprotein</keyword>
<keyword id="KW-0328">Glycosyltransferase</keyword>
<keyword id="KW-0333">Golgi apparatus</keyword>
<keyword id="KW-0472">Membrane</keyword>
<keyword id="KW-1185">Reference proteome</keyword>
<keyword id="KW-0735">Signal-anchor</keyword>
<keyword id="KW-0808">Transferase</keyword>
<keyword id="KW-0812">Transmembrane</keyword>
<keyword id="KW-1133">Transmembrane helix</keyword>
<proteinExistence type="evidence at protein level"/>
<comment type="function">
    <text evidence="9 10 11 13 14 15">Mannosyltransferase involved in outer chain elongation of asparagine-linked oligosaccharides of the type Man(9)GlcNAc(2). Adds the first alpha-1,6-mannose to the Man(8)GlcNAc(2) and Man(9)GlcNAc(2), but not Man(5)GlcNAc(2), endoplasmic reticulum intermediates. Represents the first enzymatic event required for synthesis of outer chain mannose linkages on yeast secretory proteins. Also has the potential to transfer a second alpha-1,6-mannose to the Man(8)GlcNAc(2) core oligosaccharide.</text>
</comment>
<comment type="catalytic activity">
    <reaction evidence="10 11">
        <text>Transfers an alpha-D-mannosyl residue from GDP-mannose into lipid-linked oligosaccharide, forming an alpha-(1-&gt;6)-D-mannosyl-D-mannose linkage.</text>
        <dbReference type="EC" id="2.4.1.232"/>
    </reaction>
</comment>
<comment type="cofactor">
    <cofactor evidence="11">
        <name>Mn(2+)</name>
        <dbReference type="ChEBI" id="CHEBI:29035"/>
    </cofactor>
</comment>
<comment type="biophysicochemical properties">
    <phDependence>
        <text evidence="11">Optimum pH is 7.5.</text>
    </phDependence>
</comment>
<comment type="subcellular location">
    <subcellularLocation>
        <location evidence="7 10">Endoplasmic reticulum membrane</location>
        <topology evidence="16 18">Single-pass type II membrane protein</topology>
    </subcellularLocation>
    <subcellularLocation>
        <location evidence="7 8 10">Golgi apparatus membrane</location>
        <topology evidence="18">Single-pass type II membrane protein</topology>
    </subcellularLocation>
    <text evidence="7">Is recycled between the trans-Golgi network and a late compartment of the endoplasmic reticulum.</text>
</comment>
<comment type="induction">
    <text evidence="3 4 5">Expression is regulated by SKN7, SLN1, and CDC4.</text>
</comment>
<comment type="domain">
    <text evidence="19">The conserved DXD motif is involved in enzyme activity.</text>
</comment>
<comment type="PTM">
    <text evidence="10">Glycosylated.</text>
</comment>
<comment type="disruption phenotype">
    <text evidence="2 9 10 12 14 15">Stops growing at the early stage of bud formation and rapidly loses viability at the non-permissive temperature. Exhibits a defect in the initiation of the mannose outer chain. Leads to accumulation of free forms of oligosaccharides (fOSs).</text>
</comment>
<comment type="miscellaneous">
    <text evidence="6">Present with 9490 molecules/cell in log phase SD medium.</text>
</comment>
<comment type="similarity">
    <text evidence="21">Belongs to the glycosyltransferase 32 family.</text>
</comment>
<dbReference type="EC" id="2.4.1.232" evidence="10 11"/>
<dbReference type="EMBL" id="D11095">
    <property type="protein sequence ID" value="BAA01869.1"/>
    <property type="molecule type" value="Genomic_DNA"/>
</dbReference>
<dbReference type="EMBL" id="Z72560">
    <property type="protein sequence ID" value="CAA96740.1"/>
    <property type="molecule type" value="Genomic_DNA"/>
</dbReference>
<dbReference type="EMBL" id="AY692749">
    <property type="protein sequence ID" value="AAT92768.1"/>
    <property type="molecule type" value="Genomic_DNA"/>
</dbReference>
<dbReference type="EMBL" id="BK006941">
    <property type="protein sequence ID" value="DAA08062.1"/>
    <property type="molecule type" value="Genomic_DNA"/>
</dbReference>
<dbReference type="PIR" id="S22701">
    <property type="entry name" value="S22701"/>
</dbReference>
<dbReference type="RefSeq" id="NP_011477.1">
    <property type="nucleotide sequence ID" value="NM_001180903.1"/>
</dbReference>
<dbReference type="BioGRID" id="33209">
    <property type="interactions" value="66"/>
</dbReference>
<dbReference type="DIP" id="DIP-8030N"/>
<dbReference type="FunCoup" id="P31755">
    <property type="interactions" value="104"/>
</dbReference>
<dbReference type="IntAct" id="P31755">
    <property type="interactions" value="21"/>
</dbReference>
<dbReference type="STRING" id="4932.YGL038C"/>
<dbReference type="CAZy" id="GT32">
    <property type="family name" value="Glycosyltransferase Family 32"/>
</dbReference>
<dbReference type="GlyCosmos" id="P31755">
    <property type="glycosylation" value="4 sites, No reported glycans"/>
</dbReference>
<dbReference type="GlyGen" id="P31755">
    <property type="glycosylation" value="4 sites"/>
</dbReference>
<dbReference type="PaxDb" id="4932-YGL038C"/>
<dbReference type="PeptideAtlas" id="P31755"/>
<dbReference type="EnsemblFungi" id="YGL038C_mRNA">
    <property type="protein sequence ID" value="YGL038C"/>
    <property type="gene ID" value="YGL038C"/>
</dbReference>
<dbReference type="GeneID" id="852845"/>
<dbReference type="KEGG" id="sce:YGL038C"/>
<dbReference type="AGR" id="SGD:S000003006"/>
<dbReference type="SGD" id="S000003006">
    <property type="gene designation" value="OCH1"/>
</dbReference>
<dbReference type="VEuPathDB" id="FungiDB:YGL038C"/>
<dbReference type="eggNOG" id="ENOG502QW2I">
    <property type="taxonomic scope" value="Eukaryota"/>
</dbReference>
<dbReference type="GeneTree" id="ENSGT00940000176653"/>
<dbReference type="HOGENOM" id="CLU_022381_5_2_1"/>
<dbReference type="InParanoid" id="P31755"/>
<dbReference type="OMA" id="DWADWYS"/>
<dbReference type="OrthoDB" id="409543at2759"/>
<dbReference type="BioCyc" id="MetaCyc:G3O-30552-MONOMER"/>
<dbReference type="BioCyc" id="YEAST:G3O-30552-MONOMER"/>
<dbReference type="BioGRID-ORCS" id="852845">
    <property type="hits" value="0 hits in 10 CRISPR screens"/>
</dbReference>
<dbReference type="PRO" id="PR:P31755"/>
<dbReference type="Proteomes" id="UP000002311">
    <property type="component" value="Chromosome VII"/>
</dbReference>
<dbReference type="RNAct" id="P31755">
    <property type="molecule type" value="protein"/>
</dbReference>
<dbReference type="GO" id="GO:0005789">
    <property type="term" value="C:endoplasmic reticulum membrane"/>
    <property type="evidence" value="ECO:0007669"/>
    <property type="project" value="UniProtKB-SubCell"/>
</dbReference>
<dbReference type="GO" id="GO:0000137">
    <property type="term" value="C:Golgi cis cisterna"/>
    <property type="evidence" value="ECO:0000314"/>
    <property type="project" value="SGD"/>
</dbReference>
<dbReference type="GO" id="GO:0000136">
    <property type="term" value="C:mannan polymerase complex"/>
    <property type="evidence" value="ECO:0000318"/>
    <property type="project" value="GO_Central"/>
</dbReference>
<dbReference type="GO" id="GO:0000009">
    <property type="term" value="F:alpha-1,6-mannosyltransferase activity"/>
    <property type="evidence" value="ECO:0000314"/>
    <property type="project" value="SGD"/>
</dbReference>
<dbReference type="GO" id="GO:0033164">
    <property type="term" value="F:glycolipid 1,6-alpha-mannosyltransferase activity"/>
    <property type="evidence" value="ECO:0007669"/>
    <property type="project" value="UniProtKB-EC"/>
</dbReference>
<dbReference type="GO" id="GO:0006487">
    <property type="term" value="P:protein N-linked glycosylation"/>
    <property type="evidence" value="ECO:0000315"/>
    <property type="project" value="SGD"/>
</dbReference>
<dbReference type="FunFam" id="3.90.550.20:FF:000006">
    <property type="entry name" value="Alpha-1,6-mannosyltransferase"/>
    <property type="match status" value="2"/>
</dbReference>
<dbReference type="Gene3D" id="3.90.550.20">
    <property type="match status" value="1"/>
</dbReference>
<dbReference type="InterPro" id="IPR007577">
    <property type="entry name" value="GlycoTrfase_DXD_sugar-bd_CS"/>
</dbReference>
<dbReference type="InterPro" id="IPR029044">
    <property type="entry name" value="Nucleotide-diphossugar_trans"/>
</dbReference>
<dbReference type="InterPro" id="IPR039367">
    <property type="entry name" value="Och1-like"/>
</dbReference>
<dbReference type="PANTHER" id="PTHR31834">
    <property type="entry name" value="INITIATION-SPECIFIC ALPHA-1,6-MANNOSYLTRANSFERASE"/>
    <property type="match status" value="1"/>
</dbReference>
<dbReference type="PANTHER" id="PTHR31834:SF1">
    <property type="entry name" value="INITIATION-SPECIFIC ALPHA-1,6-MANNOSYLTRANSFERASE"/>
    <property type="match status" value="1"/>
</dbReference>
<dbReference type="Pfam" id="PF04488">
    <property type="entry name" value="Gly_transf_sug"/>
    <property type="match status" value="1"/>
</dbReference>
<dbReference type="SUPFAM" id="SSF53448">
    <property type="entry name" value="Nucleotide-diphospho-sugar transferases"/>
    <property type="match status" value="1"/>
</dbReference>
<sequence length="480" mass="55156">MSRKLSHLIATRKSKTIVVTVLLIYSLLTFHLSNKRLLSQFYPSKDDFKQTLLPTTSHSQDINLKKQITVNKKKNQLHNLRDQLSFAFPYDSQAPIPQRVWQTWKVGADDKNFPSSFRTYQKTWSGSYSPDYQYSLISDDSIIPFLENLYAPVPIVIQAFKLMPGNILKADFLRYLLLFARGGIYSDMDTMLLKPIDSWPSQNKSWLNNIIDLNKPIPYKNSKPSLLSSDEISHQPGLVIGIEADPDRDDWSEWYARRIQFCQWTIQAKPGHPILRELILNITATTLASVQNPGVPVSEMIDPRFEEDYNVNYRHKRRHDETYKHSELKNNKNVDGSDIMNWTGPGIFSDIIFEYMNNVLRYNSDILLINPNLNKNDEEGSESATTPAKDVDNDTLSKSTRKFYKKISESLQSSNSMPWEFFSFLKEPVIVDDVMVLPITSFSPDVGQMGAQSSDDKMAFVKHMFSGSWKEDADKNAGHK</sequence>
<protein>
    <recommendedName>
        <fullName evidence="21">Initiation-specific alpha-1,6-mannosyltransferase</fullName>
        <ecNumber evidence="10 11">2.4.1.232</ecNumber>
    </recommendedName>
    <alternativeName>
        <fullName evidence="18">Outer chain elongation protein 1</fullName>
    </alternativeName>
</protein>
<gene>
    <name evidence="17" type="primary">OCH1</name>
    <name evidence="20" type="synonym">NGD29</name>
    <name evidence="22" type="ordered locus">YGL038C</name>
</gene>